<evidence type="ECO:0000255" key="1">
    <source>
        <dbReference type="HAMAP-Rule" id="MF_00415"/>
    </source>
</evidence>
<evidence type="ECO:0000256" key="2">
    <source>
        <dbReference type="SAM" id="MobiDB-lite"/>
    </source>
</evidence>
<name>FLGH_VIBC3</name>
<keyword id="KW-0975">Bacterial flagellum</keyword>
<keyword id="KW-0998">Cell outer membrane</keyword>
<keyword id="KW-0449">Lipoprotein</keyword>
<keyword id="KW-0472">Membrane</keyword>
<keyword id="KW-0564">Palmitate</keyword>
<keyword id="KW-0732">Signal</keyword>
<sequence>MAAMKRLLASSLLILLSGCSLMQPPIESAETIQGTTTVDAVEGDKSESNSGLTDALRNRTDPVAGDPAWAPIHPKGKPEHYAAETGSLFNLASSSSMYDDSKPRGVGDIITVTLNESTKAAKSADADLNKKNDASMDPLAVGGKDLTIGDYNFSYALKNDNKFSGSAAANQSNSMSGSITVEVIEVLANGNLVIRGEKWLTLNTGDEYIRLSGTIRPDDIDFDNTIASNRISNARIQYSGTGTNQDMQEPGFLARFFNVSL</sequence>
<feature type="signal peptide" evidence="1">
    <location>
        <begin position="1"/>
        <end position="18"/>
    </location>
</feature>
<feature type="chain" id="PRO_1000123962" description="Flagellar L-ring protein">
    <location>
        <begin position="19"/>
        <end position="261"/>
    </location>
</feature>
<feature type="region of interest" description="Disordered" evidence="2">
    <location>
        <begin position="37"/>
        <end position="67"/>
    </location>
</feature>
<feature type="lipid moiety-binding region" description="N-palmitoyl cysteine" evidence="1">
    <location>
        <position position="19"/>
    </location>
</feature>
<feature type="lipid moiety-binding region" description="S-diacylglycerol cysteine" evidence="1">
    <location>
        <position position="19"/>
    </location>
</feature>
<comment type="function">
    <text evidence="1">Assembles around the rod to form the L-ring and probably protects the motor/basal body from shearing forces during rotation.</text>
</comment>
<comment type="subunit">
    <text evidence="1">The basal body constitutes a major portion of the flagellar organelle and consists of four rings (L,P,S, and M) mounted on a central rod.</text>
</comment>
<comment type="subcellular location">
    <subcellularLocation>
        <location evidence="1">Cell outer membrane</location>
        <topology evidence="1">Lipid-anchor</topology>
    </subcellularLocation>
    <subcellularLocation>
        <location evidence="1">Bacterial flagellum basal body</location>
    </subcellularLocation>
</comment>
<comment type="similarity">
    <text evidence="1">Belongs to the FlgH family.</text>
</comment>
<protein>
    <recommendedName>
        <fullName evidence="1">Flagellar L-ring protein</fullName>
    </recommendedName>
    <alternativeName>
        <fullName evidence="1">Basal body L-ring protein</fullName>
    </alternativeName>
</protein>
<proteinExistence type="inferred from homology"/>
<accession>A5F678</accession>
<accession>C3M3F1</accession>
<dbReference type="EMBL" id="CP000627">
    <property type="protein sequence ID" value="ABQ21250.1"/>
    <property type="molecule type" value="Genomic_DNA"/>
</dbReference>
<dbReference type="EMBL" id="CP001235">
    <property type="protein sequence ID" value="ACP10300.1"/>
    <property type="molecule type" value="Genomic_DNA"/>
</dbReference>
<dbReference type="SMR" id="A5F678"/>
<dbReference type="KEGG" id="vco:VC0395_A1786"/>
<dbReference type="KEGG" id="vcr:VC395_2310"/>
<dbReference type="PATRIC" id="fig|345073.21.peg.2226"/>
<dbReference type="eggNOG" id="COG2063">
    <property type="taxonomic scope" value="Bacteria"/>
</dbReference>
<dbReference type="HOGENOM" id="CLU_069313_0_2_6"/>
<dbReference type="OrthoDB" id="9789463at2"/>
<dbReference type="Proteomes" id="UP000000249">
    <property type="component" value="Chromosome 2"/>
</dbReference>
<dbReference type="GO" id="GO:0009427">
    <property type="term" value="C:bacterial-type flagellum basal body, distal rod, L ring"/>
    <property type="evidence" value="ECO:0007669"/>
    <property type="project" value="InterPro"/>
</dbReference>
<dbReference type="GO" id="GO:0009279">
    <property type="term" value="C:cell outer membrane"/>
    <property type="evidence" value="ECO:0007669"/>
    <property type="project" value="UniProtKB-SubCell"/>
</dbReference>
<dbReference type="GO" id="GO:0003774">
    <property type="term" value="F:cytoskeletal motor activity"/>
    <property type="evidence" value="ECO:0007669"/>
    <property type="project" value="InterPro"/>
</dbReference>
<dbReference type="GO" id="GO:0071973">
    <property type="term" value="P:bacterial-type flagellum-dependent cell motility"/>
    <property type="evidence" value="ECO:0007669"/>
    <property type="project" value="InterPro"/>
</dbReference>
<dbReference type="HAMAP" id="MF_00415">
    <property type="entry name" value="FlgH"/>
    <property type="match status" value="1"/>
</dbReference>
<dbReference type="InterPro" id="IPR000527">
    <property type="entry name" value="Flag_Lring"/>
</dbReference>
<dbReference type="NCBIfam" id="NF001302">
    <property type="entry name" value="PRK00249.1-2"/>
    <property type="match status" value="1"/>
</dbReference>
<dbReference type="PANTHER" id="PTHR34933">
    <property type="entry name" value="FLAGELLAR L-RING PROTEIN"/>
    <property type="match status" value="1"/>
</dbReference>
<dbReference type="PANTHER" id="PTHR34933:SF1">
    <property type="entry name" value="FLAGELLAR L-RING PROTEIN"/>
    <property type="match status" value="1"/>
</dbReference>
<dbReference type="Pfam" id="PF02107">
    <property type="entry name" value="FlgH"/>
    <property type="match status" value="1"/>
</dbReference>
<dbReference type="PRINTS" id="PR01008">
    <property type="entry name" value="FLGLRINGFLGH"/>
</dbReference>
<dbReference type="PROSITE" id="PS51257">
    <property type="entry name" value="PROKAR_LIPOPROTEIN"/>
    <property type="match status" value="1"/>
</dbReference>
<organism>
    <name type="scientific">Vibrio cholerae serotype O1 (strain ATCC 39541 / Classical Ogawa 395 / O395)</name>
    <dbReference type="NCBI Taxonomy" id="345073"/>
    <lineage>
        <taxon>Bacteria</taxon>
        <taxon>Pseudomonadati</taxon>
        <taxon>Pseudomonadota</taxon>
        <taxon>Gammaproteobacteria</taxon>
        <taxon>Vibrionales</taxon>
        <taxon>Vibrionaceae</taxon>
        <taxon>Vibrio</taxon>
    </lineage>
</organism>
<gene>
    <name evidence="1" type="primary">flgH</name>
    <name type="ordered locus">VC0395_A1786</name>
    <name type="ordered locus">VC395_2310</name>
</gene>
<reference key="1">
    <citation type="submission" date="2007-03" db="EMBL/GenBank/DDBJ databases">
        <authorList>
            <person name="Heidelberg J."/>
        </authorList>
    </citation>
    <scope>NUCLEOTIDE SEQUENCE [LARGE SCALE GENOMIC DNA]</scope>
    <source>
        <strain>ATCC 39541 / Classical Ogawa 395 / O395</strain>
    </source>
</reference>
<reference key="2">
    <citation type="journal article" date="2008" name="PLoS ONE">
        <title>A recalibrated molecular clock and independent origins for the cholera pandemic clones.</title>
        <authorList>
            <person name="Feng L."/>
            <person name="Reeves P.R."/>
            <person name="Lan R."/>
            <person name="Ren Y."/>
            <person name="Gao C."/>
            <person name="Zhou Z."/>
            <person name="Ren Y."/>
            <person name="Cheng J."/>
            <person name="Wang W."/>
            <person name="Wang J."/>
            <person name="Qian W."/>
            <person name="Li D."/>
            <person name="Wang L."/>
        </authorList>
    </citation>
    <scope>NUCLEOTIDE SEQUENCE [LARGE SCALE GENOMIC DNA]</scope>
    <source>
        <strain>ATCC 39541 / Classical Ogawa 395 / O395</strain>
    </source>
</reference>